<gene>
    <name evidence="1" type="primary">sspK</name>
    <name type="ordered locus">BC_0501</name>
</gene>
<reference key="1">
    <citation type="journal article" date="2003" name="Nature">
        <title>Genome sequence of Bacillus cereus and comparative analysis with Bacillus anthracis.</title>
        <authorList>
            <person name="Ivanova N."/>
            <person name="Sorokin A."/>
            <person name="Anderson I."/>
            <person name="Galleron N."/>
            <person name="Candelon B."/>
            <person name="Kapatral V."/>
            <person name="Bhattacharyya A."/>
            <person name="Reznik G."/>
            <person name="Mikhailova N."/>
            <person name="Lapidus A."/>
            <person name="Chu L."/>
            <person name="Mazur M."/>
            <person name="Goltsman E."/>
            <person name="Larsen N."/>
            <person name="D'Souza M."/>
            <person name="Walunas T."/>
            <person name="Grechkin Y."/>
            <person name="Pusch G."/>
            <person name="Haselkorn R."/>
            <person name="Fonstein M."/>
            <person name="Ehrlich S.D."/>
            <person name="Overbeek R."/>
            <person name="Kyrpides N.C."/>
        </authorList>
    </citation>
    <scope>NUCLEOTIDE SEQUENCE [LARGE SCALE GENOMIC DNA]</scope>
    <source>
        <strain>ATCC 14579 / DSM 31 / CCUG 7414 / JCM 2152 / NBRC 15305 / NCIMB 9373 / NCTC 2599 / NRRL B-3711</strain>
    </source>
</reference>
<protein>
    <recommendedName>
        <fullName evidence="1">Small, acid-soluble spore protein K</fullName>
        <shortName evidence="1">SASP K</shortName>
    </recommendedName>
</protein>
<dbReference type="EMBL" id="AE016877">
    <property type="protein sequence ID" value="AAP07539.1"/>
    <property type="molecule type" value="Genomic_DNA"/>
</dbReference>
<dbReference type="RefSeq" id="NP_830338.1">
    <property type="nucleotide sequence ID" value="NC_004722.1"/>
</dbReference>
<dbReference type="RefSeq" id="WP_000517891.1">
    <property type="nucleotide sequence ID" value="NZ_CP138336.1"/>
</dbReference>
<dbReference type="STRING" id="226900.BC_0501"/>
<dbReference type="KEGG" id="bce:BC0501"/>
<dbReference type="PATRIC" id="fig|226900.8.peg.473"/>
<dbReference type="HOGENOM" id="CLU_3076423_0_0_9"/>
<dbReference type="OrthoDB" id="2382188at2"/>
<dbReference type="PRO" id="PR:Q81I94"/>
<dbReference type="Proteomes" id="UP000001417">
    <property type="component" value="Chromosome"/>
</dbReference>
<dbReference type="GO" id="GO:0042601">
    <property type="term" value="C:endospore-forming forespore"/>
    <property type="evidence" value="ECO:0007669"/>
    <property type="project" value="InterPro"/>
</dbReference>
<dbReference type="GO" id="GO:0030436">
    <property type="term" value="P:asexual sporulation"/>
    <property type="evidence" value="ECO:0007669"/>
    <property type="project" value="UniProtKB-UniRule"/>
</dbReference>
<dbReference type="GO" id="GO:0030435">
    <property type="term" value="P:sporulation resulting in formation of a cellular spore"/>
    <property type="evidence" value="ECO:0007669"/>
    <property type="project" value="UniProtKB-KW"/>
</dbReference>
<dbReference type="HAMAP" id="MF_01504">
    <property type="entry name" value="SspK"/>
    <property type="match status" value="1"/>
</dbReference>
<dbReference type="InterPro" id="IPR012611">
    <property type="entry name" value="SASP_SspK"/>
</dbReference>
<dbReference type="NCBIfam" id="NF002843">
    <property type="entry name" value="PRK03081.1"/>
    <property type="match status" value="1"/>
</dbReference>
<dbReference type="NCBIfam" id="TIGR03091">
    <property type="entry name" value="SASP_sspK"/>
    <property type="match status" value="1"/>
</dbReference>
<dbReference type="Pfam" id="PF08176">
    <property type="entry name" value="SspK"/>
    <property type="match status" value="1"/>
</dbReference>
<organism>
    <name type="scientific">Bacillus cereus (strain ATCC 14579 / DSM 31 / CCUG 7414 / JCM 2152 / NBRC 15305 / NCIMB 9373 / NCTC 2599 / NRRL B-3711)</name>
    <dbReference type="NCBI Taxonomy" id="226900"/>
    <lineage>
        <taxon>Bacteria</taxon>
        <taxon>Bacillati</taxon>
        <taxon>Bacillota</taxon>
        <taxon>Bacilli</taxon>
        <taxon>Bacillales</taxon>
        <taxon>Bacillaceae</taxon>
        <taxon>Bacillus</taxon>
        <taxon>Bacillus cereus group</taxon>
    </lineage>
</organism>
<feature type="chain" id="PRO_0000221460" description="Small, acid-soluble spore protein K">
    <location>
        <begin position="1"/>
        <end position="52"/>
    </location>
</feature>
<feature type="region of interest" description="Disordered" evidence="2">
    <location>
        <begin position="1"/>
        <end position="52"/>
    </location>
</feature>
<name>SSPK_BACCR</name>
<comment type="subcellular location">
    <subcellularLocation>
        <location evidence="1">Spore core</location>
    </subcellularLocation>
</comment>
<comment type="induction">
    <text evidence="1">Expressed only in the forespore compartment of sporulating cells.</text>
</comment>
<comment type="similarity">
    <text evidence="1">Belongs to the SspK family.</text>
</comment>
<sequence>MGKQAEFWSESKNNSKIDGQPKAKSRFASKRPNGTINTHPQERMRAANQQEE</sequence>
<keyword id="KW-1185">Reference proteome</keyword>
<keyword id="KW-0749">Sporulation</keyword>
<proteinExistence type="inferred from homology"/>
<evidence type="ECO:0000255" key="1">
    <source>
        <dbReference type="HAMAP-Rule" id="MF_01504"/>
    </source>
</evidence>
<evidence type="ECO:0000256" key="2">
    <source>
        <dbReference type="SAM" id="MobiDB-lite"/>
    </source>
</evidence>
<accession>Q81I94</accession>